<protein>
    <recommendedName>
        <fullName evidence="1">Histidinol-phosphate aminotransferase</fullName>
        <ecNumber evidence="1">2.6.1.9</ecNumber>
    </recommendedName>
    <alternativeName>
        <fullName evidence="1">Imidazole acetol-phosphate transaminase</fullName>
    </alternativeName>
</protein>
<accession>A3CWS8</accession>
<keyword id="KW-0028">Amino-acid biosynthesis</keyword>
<keyword id="KW-0032">Aminotransferase</keyword>
<keyword id="KW-0368">Histidine biosynthesis</keyword>
<keyword id="KW-0663">Pyridoxal phosphate</keyword>
<keyword id="KW-0808">Transferase</keyword>
<evidence type="ECO:0000255" key="1">
    <source>
        <dbReference type="HAMAP-Rule" id="MF_01023"/>
    </source>
</evidence>
<reference key="1">
    <citation type="journal article" date="2009" name="Stand. Genomic Sci.">
        <title>Complete genome sequence of Methanoculleus marisnigri Romesser et al. 1981 type strain JR1.</title>
        <authorList>
            <person name="Anderson I.J."/>
            <person name="Sieprawska-Lupa M."/>
            <person name="Lapidus A."/>
            <person name="Nolan M."/>
            <person name="Copeland A."/>
            <person name="Glavina Del Rio T."/>
            <person name="Tice H."/>
            <person name="Dalin E."/>
            <person name="Barry K."/>
            <person name="Saunders E."/>
            <person name="Han C."/>
            <person name="Brettin T."/>
            <person name="Detter J.C."/>
            <person name="Bruce D."/>
            <person name="Mikhailova N."/>
            <person name="Pitluck S."/>
            <person name="Hauser L."/>
            <person name="Land M."/>
            <person name="Lucas S."/>
            <person name="Richardson P."/>
            <person name="Whitman W.B."/>
            <person name="Kyrpides N.C."/>
        </authorList>
    </citation>
    <scope>NUCLEOTIDE SEQUENCE [LARGE SCALE GENOMIC DNA]</scope>
    <source>
        <strain>ATCC 35101 / DSM 1498 / JR1</strain>
    </source>
</reference>
<proteinExistence type="inferred from homology"/>
<organism>
    <name type="scientific">Methanoculleus marisnigri (strain ATCC 35101 / DSM 1498 / JR1)</name>
    <dbReference type="NCBI Taxonomy" id="368407"/>
    <lineage>
        <taxon>Archaea</taxon>
        <taxon>Methanobacteriati</taxon>
        <taxon>Methanobacteriota</taxon>
        <taxon>Stenosarchaea group</taxon>
        <taxon>Methanomicrobia</taxon>
        <taxon>Methanomicrobiales</taxon>
        <taxon>Methanomicrobiaceae</taxon>
        <taxon>Methanoculleus</taxon>
    </lineage>
</organism>
<name>HIS8_METMJ</name>
<gene>
    <name evidence="1" type="primary">hisC</name>
    <name type="ordered locus">Memar_1902</name>
</gene>
<dbReference type="EC" id="2.6.1.9" evidence="1"/>
<dbReference type="EMBL" id="CP000562">
    <property type="protein sequence ID" value="ABN57828.1"/>
    <property type="molecule type" value="Genomic_DNA"/>
</dbReference>
<dbReference type="RefSeq" id="WP_011844737.1">
    <property type="nucleotide sequence ID" value="NC_009051.1"/>
</dbReference>
<dbReference type="SMR" id="A3CWS8"/>
<dbReference type="STRING" id="368407.Memar_1902"/>
<dbReference type="GeneID" id="4846352"/>
<dbReference type="GeneID" id="76729979"/>
<dbReference type="KEGG" id="mem:Memar_1902"/>
<dbReference type="eggNOG" id="arCOG04273">
    <property type="taxonomic scope" value="Archaea"/>
</dbReference>
<dbReference type="HOGENOM" id="CLU_017584_3_3_2"/>
<dbReference type="OrthoDB" id="9929at2157"/>
<dbReference type="UniPathway" id="UPA00031">
    <property type="reaction ID" value="UER00012"/>
</dbReference>
<dbReference type="Proteomes" id="UP000002146">
    <property type="component" value="Chromosome"/>
</dbReference>
<dbReference type="GO" id="GO:0004400">
    <property type="term" value="F:histidinol-phosphate transaminase activity"/>
    <property type="evidence" value="ECO:0007669"/>
    <property type="project" value="UniProtKB-UniRule"/>
</dbReference>
<dbReference type="GO" id="GO:0030170">
    <property type="term" value="F:pyridoxal phosphate binding"/>
    <property type="evidence" value="ECO:0007669"/>
    <property type="project" value="InterPro"/>
</dbReference>
<dbReference type="GO" id="GO:0000105">
    <property type="term" value="P:L-histidine biosynthetic process"/>
    <property type="evidence" value="ECO:0007669"/>
    <property type="project" value="UniProtKB-UniRule"/>
</dbReference>
<dbReference type="CDD" id="cd00609">
    <property type="entry name" value="AAT_like"/>
    <property type="match status" value="1"/>
</dbReference>
<dbReference type="Gene3D" id="3.90.1150.10">
    <property type="entry name" value="Aspartate Aminotransferase, domain 1"/>
    <property type="match status" value="1"/>
</dbReference>
<dbReference type="Gene3D" id="3.40.640.10">
    <property type="entry name" value="Type I PLP-dependent aspartate aminotransferase-like (Major domain)"/>
    <property type="match status" value="1"/>
</dbReference>
<dbReference type="HAMAP" id="MF_01023">
    <property type="entry name" value="HisC_aminotrans_2"/>
    <property type="match status" value="1"/>
</dbReference>
<dbReference type="InterPro" id="IPR004839">
    <property type="entry name" value="Aminotransferase_I/II_large"/>
</dbReference>
<dbReference type="InterPro" id="IPR005861">
    <property type="entry name" value="HisP_aminotrans"/>
</dbReference>
<dbReference type="InterPro" id="IPR050106">
    <property type="entry name" value="HistidinolP_aminotransfase"/>
</dbReference>
<dbReference type="InterPro" id="IPR015424">
    <property type="entry name" value="PyrdxlP-dep_Trfase"/>
</dbReference>
<dbReference type="InterPro" id="IPR015421">
    <property type="entry name" value="PyrdxlP-dep_Trfase_major"/>
</dbReference>
<dbReference type="InterPro" id="IPR015422">
    <property type="entry name" value="PyrdxlP-dep_Trfase_small"/>
</dbReference>
<dbReference type="NCBIfam" id="TIGR01141">
    <property type="entry name" value="hisC"/>
    <property type="match status" value="1"/>
</dbReference>
<dbReference type="PANTHER" id="PTHR43643:SF6">
    <property type="entry name" value="HISTIDINOL-PHOSPHATE AMINOTRANSFERASE"/>
    <property type="match status" value="1"/>
</dbReference>
<dbReference type="PANTHER" id="PTHR43643">
    <property type="entry name" value="HISTIDINOL-PHOSPHATE AMINOTRANSFERASE 2"/>
    <property type="match status" value="1"/>
</dbReference>
<dbReference type="Pfam" id="PF00155">
    <property type="entry name" value="Aminotran_1_2"/>
    <property type="match status" value="1"/>
</dbReference>
<dbReference type="SUPFAM" id="SSF53383">
    <property type="entry name" value="PLP-dependent transferases"/>
    <property type="match status" value="1"/>
</dbReference>
<feature type="chain" id="PRO_0000319801" description="Histidinol-phosphate aminotransferase">
    <location>
        <begin position="1"/>
        <end position="352"/>
    </location>
</feature>
<feature type="modified residue" description="N6-(pyridoxal phosphate)lysine" evidence="1">
    <location>
        <position position="216"/>
    </location>
</feature>
<sequence length="352" mass="39067">MRRLVRACYTGTGGYSYAKKADDVAREHGFDRVARLASNENPRPPSPAALEAATVALREVNRYPDERTSVLVEALRRYHGDYRFVTGSGMDGVIETVIRTVVEPGETMVVSTPTFSFYGIAAAAHGARVVNVPRREDFSVDTGAFIDACHGAKLAFLCSPNNPTGNSVPPEDVEAILEGMDGLLFLDNAYVDFADTDYRPLMRRYENLVIGRTMSKIFALAGLRVGYAFVPEWLEPFYQRAATPFALNSVSMAAAGGALADTERVRETRDHVREWRRRFLEEVPFRVYPSDANFVMIDVDPHTGDEAVARLAAKGVLVRSCTSFPGLGNHYIRVCIGEDWENIRFLEAIKNL</sequence>
<comment type="catalytic activity">
    <reaction evidence="1">
        <text>L-histidinol phosphate + 2-oxoglutarate = 3-(imidazol-4-yl)-2-oxopropyl phosphate + L-glutamate</text>
        <dbReference type="Rhea" id="RHEA:23744"/>
        <dbReference type="ChEBI" id="CHEBI:16810"/>
        <dbReference type="ChEBI" id="CHEBI:29985"/>
        <dbReference type="ChEBI" id="CHEBI:57766"/>
        <dbReference type="ChEBI" id="CHEBI:57980"/>
        <dbReference type="EC" id="2.6.1.9"/>
    </reaction>
</comment>
<comment type="cofactor">
    <cofactor evidence="1">
        <name>pyridoxal 5'-phosphate</name>
        <dbReference type="ChEBI" id="CHEBI:597326"/>
    </cofactor>
</comment>
<comment type="pathway">
    <text evidence="1">Amino-acid biosynthesis; L-histidine biosynthesis; L-histidine from 5-phospho-alpha-D-ribose 1-diphosphate: step 7/9.</text>
</comment>
<comment type="similarity">
    <text evidence="1">Belongs to the class-II pyridoxal-phosphate-dependent aminotransferase family. Histidinol-phosphate aminotransferase subfamily.</text>
</comment>